<gene>
    <name type="primary">Lpar6</name>
    <name type="synonym">P2ry5</name>
    <name type="synonym">P2y5</name>
</gene>
<keyword id="KW-1003">Cell membrane</keyword>
<keyword id="KW-1015">Disulfide bond</keyword>
<keyword id="KW-0297">G-protein coupled receptor</keyword>
<keyword id="KW-0325">Glycoprotein</keyword>
<keyword id="KW-0449">Lipoprotein</keyword>
<keyword id="KW-0472">Membrane</keyword>
<keyword id="KW-0564">Palmitate</keyword>
<keyword id="KW-0675">Receptor</keyword>
<keyword id="KW-1185">Reference proteome</keyword>
<keyword id="KW-0807">Transducer</keyword>
<keyword id="KW-0812">Transmembrane</keyword>
<keyword id="KW-1133">Transmembrane helix</keyword>
<proteinExistence type="evidence at protein level"/>
<reference key="1">
    <citation type="journal article" date="2005" name="Science">
        <title>The transcriptional landscape of the mammalian genome.</title>
        <authorList>
            <person name="Carninci P."/>
            <person name="Kasukawa T."/>
            <person name="Katayama S."/>
            <person name="Gough J."/>
            <person name="Frith M.C."/>
            <person name="Maeda N."/>
            <person name="Oyama R."/>
            <person name="Ravasi T."/>
            <person name="Lenhard B."/>
            <person name="Wells C."/>
            <person name="Kodzius R."/>
            <person name="Shimokawa K."/>
            <person name="Bajic V.B."/>
            <person name="Brenner S.E."/>
            <person name="Batalov S."/>
            <person name="Forrest A.R."/>
            <person name="Zavolan M."/>
            <person name="Davis M.J."/>
            <person name="Wilming L.G."/>
            <person name="Aidinis V."/>
            <person name="Allen J.E."/>
            <person name="Ambesi-Impiombato A."/>
            <person name="Apweiler R."/>
            <person name="Aturaliya R.N."/>
            <person name="Bailey T.L."/>
            <person name="Bansal M."/>
            <person name="Baxter L."/>
            <person name="Beisel K.W."/>
            <person name="Bersano T."/>
            <person name="Bono H."/>
            <person name="Chalk A.M."/>
            <person name="Chiu K.P."/>
            <person name="Choudhary V."/>
            <person name="Christoffels A."/>
            <person name="Clutterbuck D.R."/>
            <person name="Crowe M.L."/>
            <person name="Dalla E."/>
            <person name="Dalrymple B.P."/>
            <person name="de Bono B."/>
            <person name="Della Gatta G."/>
            <person name="di Bernardo D."/>
            <person name="Down T."/>
            <person name="Engstrom P."/>
            <person name="Fagiolini M."/>
            <person name="Faulkner G."/>
            <person name="Fletcher C.F."/>
            <person name="Fukushima T."/>
            <person name="Furuno M."/>
            <person name="Futaki S."/>
            <person name="Gariboldi M."/>
            <person name="Georgii-Hemming P."/>
            <person name="Gingeras T.R."/>
            <person name="Gojobori T."/>
            <person name="Green R.E."/>
            <person name="Gustincich S."/>
            <person name="Harbers M."/>
            <person name="Hayashi Y."/>
            <person name="Hensch T.K."/>
            <person name="Hirokawa N."/>
            <person name="Hill D."/>
            <person name="Huminiecki L."/>
            <person name="Iacono M."/>
            <person name="Ikeo K."/>
            <person name="Iwama A."/>
            <person name="Ishikawa T."/>
            <person name="Jakt M."/>
            <person name="Kanapin A."/>
            <person name="Katoh M."/>
            <person name="Kawasawa Y."/>
            <person name="Kelso J."/>
            <person name="Kitamura H."/>
            <person name="Kitano H."/>
            <person name="Kollias G."/>
            <person name="Krishnan S.P."/>
            <person name="Kruger A."/>
            <person name="Kummerfeld S.K."/>
            <person name="Kurochkin I.V."/>
            <person name="Lareau L.F."/>
            <person name="Lazarevic D."/>
            <person name="Lipovich L."/>
            <person name="Liu J."/>
            <person name="Liuni S."/>
            <person name="McWilliam S."/>
            <person name="Madan Babu M."/>
            <person name="Madera M."/>
            <person name="Marchionni L."/>
            <person name="Matsuda H."/>
            <person name="Matsuzawa S."/>
            <person name="Miki H."/>
            <person name="Mignone F."/>
            <person name="Miyake S."/>
            <person name="Morris K."/>
            <person name="Mottagui-Tabar S."/>
            <person name="Mulder N."/>
            <person name="Nakano N."/>
            <person name="Nakauchi H."/>
            <person name="Ng P."/>
            <person name="Nilsson R."/>
            <person name="Nishiguchi S."/>
            <person name="Nishikawa S."/>
            <person name="Nori F."/>
            <person name="Ohara O."/>
            <person name="Okazaki Y."/>
            <person name="Orlando V."/>
            <person name="Pang K.C."/>
            <person name="Pavan W.J."/>
            <person name="Pavesi G."/>
            <person name="Pesole G."/>
            <person name="Petrovsky N."/>
            <person name="Piazza S."/>
            <person name="Reed J."/>
            <person name="Reid J.F."/>
            <person name="Ring B.Z."/>
            <person name="Ringwald M."/>
            <person name="Rost B."/>
            <person name="Ruan Y."/>
            <person name="Salzberg S.L."/>
            <person name="Sandelin A."/>
            <person name="Schneider C."/>
            <person name="Schoenbach C."/>
            <person name="Sekiguchi K."/>
            <person name="Semple C.A."/>
            <person name="Seno S."/>
            <person name="Sessa L."/>
            <person name="Sheng Y."/>
            <person name="Shibata Y."/>
            <person name="Shimada H."/>
            <person name="Shimada K."/>
            <person name="Silva D."/>
            <person name="Sinclair B."/>
            <person name="Sperling S."/>
            <person name="Stupka E."/>
            <person name="Sugiura K."/>
            <person name="Sultana R."/>
            <person name="Takenaka Y."/>
            <person name="Taki K."/>
            <person name="Tammoja K."/>
            <person name="Tan S.L."/>
            <person name="Tang S."/>
            <person name="Taylor M.S."/>
            <person name="Tegner J."/>
            <person name="Teichmann S.A."/>
            <person name="Ueda H.R."/>
            <person name="van Nimwegen E."/>
            <person name="Verardo R."/>
            <person name="Wei C.L."/>
            <person name="Yagi K."/>
            <person name="Yamanishi H."/>
            <person name="Zabarovsky E."/>
            <person name="Zhu S."/>
            <person name="Zimmer A."/>
            <person name="Hide W."/>
            <person name="Bult C."/>
            <person name="Grimmond S.M."/>
            <person name="Teasdale R.D."/>
            <person name="Liu E.T."/>
            <person name="Brusic V."/>
            <person name="Quackenbush J."/>
            <person name="Wahlestedt C."/>
            <person name="Mattick J.S."/>
            <person name="Hume D.A."/>
            <person name="Kai C."/>
            <person name="Sasaki D."/>
            <person name="Tomaru Y."/>
            <person name="Fukuda S."/>
            <person name="Kanamori-Katayama M."/>
            <person name="Suzuki M."/>
            <person name="Aoki J."/>
            <person name="Arakawa T."/>
            <person name="Iida J."/>
            <person name="Imamura K."/>
            <person name="Itoh M."/>
            <person name="Kato T."/>
            <person name="Kawaji H."/>
            <person name="Kawagashira N."/>
            <person name="Kawashima T."/>
            <person name="Kojima M."/>
            <person name="Kondo S."/>
            <person name="Konno H."/>
            <person name="Nakano K."/>
            <person name="Ninomiya N."/>
            <person name="Nishio T."/>
            <person name="Okada M."/>
            <person name="Plessy C."/>
            <person name="Shibata K."/>
            <person name="Shiraki T."/>
            <person name="Suzuki S."/>
            <person name="Tagami M."/>
            <person name="Waki K."/>
            <person name="Watahiki A."/>
            <person name="Okamura-Oho Y."/>
            <person name="Suzuki H."/>
            <person name="Kawai J."/>
            <person name="Hayashizaki Y."/>
        </authorList>
    </citation>
    <scope>NUCLEOTIDE SEQUENCE [LARGE SCALE MRNA]</scope>
    <source>
        <strain>C57BL/6J</strain>
        <strain>NOD</strain>
        <tissue>Mesonephros</tissue>
        <tissue>Thymus</tissue>
    </source>
</reference>
<reference key="2">
    <citation type="journal article" date="2004" name="Genome Res.">
        <title>The status, quality, and expansion of the NIH full-length cDNA project: the Mammalian Gene Collection (MGC).</title>
        <authorList>
            <consortium name="The MGC Project Team"/>
        </authorList>
    </citation>
    <scope>NUCLEOTIDE SEQUENCE [LARGE SCALE MRNA]</scope>
    <source>
        <tissue>Bone</tissue>
        <tissue>Brain</tissue>
        <tissue>Mammary gland</tissue>
    </source>
</reference>
<reference key="3">
    <citation type="journal article" date="2008" name="Nat. Genet.">
        <title>G protein-coupled receptor P2Y5 and its ligand LPA are involved in maintenance of human hair growth.</title>
        <authorList>
            <person name="Pasternack S.M."/>
            <person name="von Kuegelgen I."/>
            <person name="Aboud K.A."/>
            <person name="Lee Y.-A."/>
            <person name="Rueschendorf F."/>
            <person name="Voss K."/>
            <person name="Hillmer A.M."/>
            <person name="Molderings G.J."/>
            <person name="Franz T."/>
            <person name="Ramirez A."/>
            <person name="Nuernberg P."/>
            <person name="Noethen M.M."/>
            <person name="Betz R.C."/>
        </authorList>
    </citation>
    <scope>TISSUE SPECIFICITY</scope>
</reference>
<reference key="4">
    <citation type="journal article" date="2008" name="Nat. Genet.">
        <title>Disruption of P2RY5, an orphan G protein-coupled receptor, underlies autosomal recessive woolly hair.</title>
        <authorList>
            <person name="Shimomura Y."/>
            <person name="Wajid M."/>
            <person name="Ishii Y."/>
            <person name="Shapiro L."/>
            <person name="Petukhova L."/>
            <person name="Gordon D."/>
            <person name="Christiano A.M."/>
        </authorList>
    </citation>
    <scope>TISSUE SPECIFICITY</scope>
</reference>
<reference key="5">
    <citation type="journal article" date="2010" name="Cell">
        <title>A tissue-specific atlas of mouse protein phosphorylation and expression.</title>
        <authorList>
            <person name="Huttlin E.L."/>
            <person name="Jedrychowski M.P."/>
            <person name="Elias J.E."/>
            <person name="Goswami T."/>
            <person name="Rad R."/>
            <person name="Beausoleil S.A."/>
            <person name="Villen J."/>
            <person name="Haas W."/>
            <person name="Sowa M.E."/>
            <person name="Gygi S.P."/>
        </authorList>
    </citation>
    <scope>IDENTIFICATION BY MASS SPECTROMETRY [LARGE SCALE ANALYSIS]</scope>
    <source>
        <tissue>Brown adipose tissue</tissue>
    </source>
</reference>
<sequence length="344" mass="39439">MVSSNGSQCPYDDSFKYTLYGCMFSMVFVLGLISNCVAIYIFICALKVRNETTTYMINLAMSDLLFVFTLPFRIFYFATRNWPFGDLLCKISVMLFYTNMYGSILFLTCISVDRFLAIVYPFKSKTLRTKRNAKIVCIAVWFTVMGGSAPAVFFQSTHSQGNNTSEACFENFPAATWKTYLSRIVIFIEIVGFFIPLILNVTCSSMVLRTLNKPVTLSRSKMNKTKVLKMIFVHLVIFCFCFVPYNINLILYSLMRTQTFVNCSVVAAVRTMYPITLCIAVSNCCFDPIVYYFTSDTIQNSIKMKNWSVRRSDSRFSEVQGTENFIQHNLQTLKNKIFDNESAI</sequence>
<name>LPAR6_MOUSE</name>
<protein>
    <recommendedName>
        <fullName>Lysophosphatidic acid receptor 6</fullName>
        <shortName>LPA receptor 6</shortName>
        <shortName>LPA-6</shortName>
    </recommendedName>
    <alternativeName>
        <fullName>Oleoyl-L-alpha-lysophosphatidic acid receptor</fullName>
    </alternativeName>
    <alternativeName>
        <fullName>P2Y purinoceptor 5</fullName>
        <shortName>P2Y5</shortName>
    </alternativeName>
    <alternativeName>
        <fullName>Purinergic receptor 5</fullName>
    </alternativeName>
</protein>
<accession>Q8BMC0</accession>
<accession>A6H6N5</accession>
<accession>Q3TEJ6</accession>
<organism>
    <name type="scientific">Mus musculus</name>
    <name type="common">Mouse</name>
    <dbReference type="NCBI Taxonomy" id="10090"/>
    <lineage>
        <taxon>Eukaryota</taxon>
        <taxon>Metazoa</taxon>
        <taxon>Chordata</taxon>
        <taxon>Craniata</taxon>
        <taxon>Vertebrata</taxon>
        <taxon>Euteleostomi</taxon>
        <taxon>Mammalia</taxon>
        <taxon>Eutheria</taxon>
        <taxon>Euarchontoglires</taxon>
        <taxon>Glires</taxon>
        <taxon>Rodentia</taxon>
        <taxon>Myomorpha</taxon>
        <taxon>Muroidea</taxon>
        <taxon>Muridae</taxon>
        <taxon>Murinae</taxon>
        <taxon>Mus</taxon>
        <taxon>Mus</taxon>
    </lineage>
</organism>
<evidence type="ECO:0000250" key="1"/>
<evidence type="ECO:0000255" key="2"/>
<evidence type="ECO:0000255" key="3">
    <source>
        <dbReference type="PROSITE-ProRule" id="PRU00521"/>
    </source>
</evidence>
<evidence type="ECO:0000269" key="4">
    <source>
    </source>
</evidence>
<evidence type="ECO:0000269" key="5">
    <source>
    </source>
</evidence>
<comment type="function">
    <text evidence="1">Binds to oleoyl-L-alpha-lysophosphatidic acid (LPA). Intracellular cAMP is involved in the receptor activation. Important for the maintenance of hair growth and texture (By similarity).</text>
</comment>
<comment type="subcellular location">
    <subcellularLocation>
        <location>Cell membrane</location>
        <topology>Multi-pass membrane protein</topology>
    </subcellularLocation>
</comment>
<comment type="tissue specificity">
    <text evidence="4 5">Ubiquitously expressed. Detected in the hair follicles and skin (at protein level).</text>
</comment>
<comment type="similarity">
    <text evidence="3">Belongs to the G-protein coupled receptor 1 family.</text>
</comment>
<feature type="chain" id="PRO_0000070026" description="Lysophosphatidic acid receptor 6">
    <location>
        <begin position="1"/>
        <end position="344"/>
    </location>
</feature>
<feature type="topological domain" description="Extracellular" evidence="2">
    <location>
        <begin position="1"/>
        <end position="25"/>
    </location>
</feature>
<feature type="transmembrane region" description="Helical; Name=1" evidence="2">
    <location>
        <begin position="26"/>
        <end position="46"/>
    </location>
</feature>
<feature type="topological domain" description="Cytoplasmic" evidence="2">
    <location>
        <begin position="47"/>
        <end position="56"/>
    </location>
</feature>
<feature type="transmembrane region" description="Helical; Name=2" evidence="2">
    <location>
        <begin position="57"/>
        <end position="77"/>
    </location>
</feature>
<feature type="topological domain" description="Extracellular" evidence="2">
    <location>
        <begin position="78"/>
        <end position="90"/>
    </location>
</feature>
<feature type="transmembrane region" description="Helical; Name=3" evidence="2">
    <location>
        <begin position="91"/>
        <end position="111"/>
    </location>
</feature>
<feature type="topological domain" description="Cytoplasmic" evidence="2">
    <location>
        <begin position="112"/>
        <end position="134"/>
    </location>
</feature>
<feature type="transmembrane region" description="Helical; Name=4" evidence="2">
    <location>
        <begin position="135"/>
        <end position="155"/>
    </location>
</feature>
<feature type="topological domain" description="Extracellular" evidence="2">
    <location>
        <begin position="156"/>
        <end position="183"/>
    </location>
</feature>
<feature type="transmembrane region" description="Helical; Name=5" evidence="2">
    <location>
        <begin position="184"/>
        <end position="204"/>
    </location>
</feature>
<feature type="topological domain" description="Cytoplasmic" evidence="2">
    <location>
        <begin position="205"/>
        <end position="230"/>
    </location>
</feature>
<feature type="transmembrane region" description="Helical; Name=6" evidence="2">
    <location>
        <begin position="231"/>
        <end position="251"/>
    </location>
</feature>
<feature type="topological domain" description="Extracellular" evidence="2">
    <location>
        <begin position="252"/>
        <end position="272"/>
    </location>
</feature>
<feature type="transmembrane region" description="Helical; Name=7" evidence="2">
    <location>
        <begin position="273"/>
        <end position="293"/>
    </location>
</feature>
<feature type="topological domain" description="Cytoplasmic" evidence="2">
    <location>
        <begin position="294"/>
        <end position="344"/>
    </location>
</feature>
<feature type="lipid moiety-binding region" description="S-palmitoyl cysteine" evidence="1">
    <location>
        <position position="284"/>
    </location>
</feature>
<feature type="glycosylation site" description="N-linked (GlcNAc...) asparagine" evidence="2">
    <location>
        <position position="5"/>
    </location>
</feature>
<feature type="glycosylation site" description="N-linked (GlcNAc...) asparagine" evidence="2">
    <location>
        <position position="162"/>
    </location>
</feature>
<feature type="glycosylation site" description="N-linked (GlcNAc...) asparagine" evidence="2">
    <location>
        <position position="163"/>
    </location>
</feature>
<feature type="glycosylation site" description="N-linked (GlcNAc...) asparagine" evidence="2">
    <location>
        <position position="262"/>
    </location>
</feature>
<feature type="disulfide bond" evidence="3">
    <location>
        <begin position="89"/>
        <end position="168"/>
    </location>
</feature>
<dbReference type="EMBL" id="AK032901">
    <property type="protein sequence ID" value="BAC28077.1"/>
    <property type="molecule type" value="mRNA"/>
</dbReference>
<dbReference type="EMBL" id="AK169602">
    <property type="protein sequence ID" value="BAE41252.1"/>
    <property type="molecule type" value="mRNA"/>
</dbReference>
<dbReference type="EMBL" id="BC145940">
    <property type="protein sequence ID" value="AAI45941.1"/>
    <property type="molecule type" value="mRNA"/>
</dbReference>
<dbReference type="EMBL" id="BC145942">
    <property type="protein sequence ID" value="AAI45943.1"/>
    <property type="molecule type" value="mRNA"/>
</dbReference>
<dbReference type="EMBL" id="BC069991">
    <property type="protein sequence ID" value="AAH69991.1"/>
    <property type="molecule type" value="mRNA"/>
</dbReference>
<dbReference type="EMBL" id="BC047931">
    <property type="protein sequence ID" value="AAH47931.1"/>
    <property type="molecule type" value="mRNA"/>
</dbReference>
<dbReference type="CCDS" id="CCDS27268.1"/>
<dbReference type="RefSeq" id="NP_780325.1">
    <property type="nucleotide sequence ID" value="NM_175116.4"/>
</dbReference>
<dbReference type="SMR" id="Q8BMC0"/>
<dbReference type="FunCoup" id="Q8BMC0">
    <property type="interactions" value="1504"/>
</dbReference>
<dbReference type="STRING" id="10090.ENSMUSP00000042327"/>
<dbReference type="GuidetoPHARMACOLOGY" id="163"/>
<dbReference type="SwissLipids" id="SLP:000001580"/>
<dbReference type="GlyCosmos" id="Q8BMC0">
    <property type="glycosylation" value="4 sites, No reported glycans"/>
</dbReference>
<dbReference type="GlyGen" id="Q8BMC0">
    <property type="glycosylation" value="4 sites"/>
</dbReference>
<dbReference type="iPTMnet" id="Q8BMC0"/>
<dbReference type="PhosphoSitePlus" id="Q8BMC0"/>
<dbReference type="jPOST" id="Q8BMC0"/>
<dbReference type="PaxDb" id="10090-ENSMUSP00000042327"/>
<dbReference type="ProteomicsDB" id="292355"/>
<dbReference type="Antibodypedia" id="9381">
    <property type="antibodies" value="151 antibodies from 27 providers"/>
</dbReference>
<dbReference type="DNASU" id="67168"/>
<dbReference type="Ensembl" id="ENSMUST00000044405.8">
    <property type="protein sequence ID" value="ENSMUSP00000042327.7"/>
    <property type="gene ID" value="ENSMUSG00000033446.8"/>
</dbReference>
<dbReference type="GeneID" id="67168"/>
<dbReference type="KEGG" id="mmu:67168"/>
<dbReference type="UCSC" id="uc007upq.2">
    <property type="organism name" value="mouse"/>
</dbReference>
<dbReference type="AGR" id="MGI:1914418"/>
<dbReference type="CTD" id="10161"/>
<dbReference type="MGI" id="MGI:1914418">
    <property type="gene designation" value="Lpar6"/>
</dbReference>
<dbReference type="VEuPathDB" id="HostDB:ENSMUSG00000033446"/>
<dbReference type="eggNOG" id="ENOG502QSC2">
    <property type="taxonomic scope" value="Eukaryota"/>
</dbReference>
<dbReference type="GeneTree" id="ENSGT01040000240444"/>
<dbReference type="HOGENOM" id="CLU_009579_8_2_1"/>
<dbReference type="InParanoid" id="Q8BMC0"/>
<dbReference type="OMA" id="NMYGSML"/>
<dbReference type="OrthoDB" id="5781782at2759"/>
<dbReference type="PhylomeDB" id="Q8BMC0"/>
<dbReference type="TreeFam" id="TF350009"/>
<dbReference type="Reactome" id="R-MMU-416476">
    <property type="pathway name" value="G alpha (q) signalling events"/>
</dbReference>
<dbReference type="Reactome" id="R-MMU-417957">
    <property type="pathway name" value="P2Y receptors"/>
</dbReference>
<dbReference type="BioGRID-ORCS" id="67168">
    <property type="hits" value="6 hits in 79 CRISPR screens"/>
</dbReference>
<dbReference type="ChiTaRS" id="Lpar6">
    <property type="organism name" value="mouse"/>
</dbReference>
<dbReference type="PRO" id="PR:Q8BMC0"/>
<dbReference type="Proteomes" id="UP000000589">
    <property type="component" value="Chromosome 14"/>
</dbReference>
<dbReference type="RNAct" id="Q8BMC0">
    <property type="molecule type" value="protein"/>
</dbReference>
<dbReference type="Bgee" id="ENSMUSG00000033446">
    <property type="expression patterns" value="Expressed in dorsal pancreas and 196 other cell types or tissues"/>
</dbReference>
<dbReference type="GO" id="GO:0043231">
    <property type="term" value="C:intracellular membrane-bounded organelle"/>
    <property type="evidence" value="ECO:0007669"/>
    <property type="project" value="Ensembl"/>
</dbReference>
<dbReference type="GO" id="GO:0005886">
    <property type="term" value="C:plasma membrane"/>
    <property type="evidence" value="ECO:0007669"/>
    <property type="project" value="UniProtKB-SubCell"/>
</dbReference>
<dbReference type="GO" id="GO:0004930">
    <property type="term" value="F:G protein-coupled receptor activity"/>
    <property type="evidence" value="ECO:0007669"/>
    <property type="project" value="UniProtKB-KW"/>
</dbReference>
<dbReference type="GO" id="GO:0001835">
    <property type="term" value="P:blastocyst hatching"/>
    <property type="evidence" value="ECO:0000315"/>
    <property type="project" value="MGI"/>
</dbReference>
<dbReference type="CDD" id="cd15156">
    <property type="entry name" value="7tmA_LPAR6_P2Y5"/>
    <property type="match status" value="1"/>
</dbReference>
<dbReference type="FunFam" id="1.20.1070.10:FF:000017">
    <property type="entry name" value="lysophosphatidic acid receptor 4"/>
    <property type="match status" value="1"/>
</dbReference>
<dbReference type="Gene3D" id="1.20.1070.10">
    <property type="entry name" value="Rhodopsin 7-helix transmembrane proteins"/>
    <property type="match status" value="1"/>
</dbReference>
<dbReference type="InterPro" id="IPR000276">
    <property type="entry name" value="GPCR_Rhodpsn"/>
</dbReference>
<dbReference type="InterPro" id="IPR017452">
    <property type="entry name" value="GPCR_Rhodpsn_7TM"/>
</dbReference>
<dbReference type="PANTHER" id="PTHR24232">
    <property type="entry name" value="G-PROTEIN COUPLED RECEPTOR"/>
    <property type="match status" value="1"/>
</dbReference>
<dbReference type="PANTHER" id="PTHR24232:SF3">
    <property type="entry name" value="LYSOPHOSPHATIDIC ACID RECEPTOR 6"/>
    <property type="match status" value="1"/>
</dbReference>
<dbReference type="Pfam" id="PF00001">
    <property type="entry name" value="7tm_1"/>
    <property type="match status" value="1"/>
</dbReference>
<dbReference type="PRINTS" id="PR00237">
    <property type="entry name" value="GPCRRHODOPSN"/>
</dbReference>
<dbReference type="PRINTS" id="PR01067">
    <property type="entry name" value="P2Y5ORPHANR"/>
</dbReference>
<dbReference type="SUPFAM" id="SSF81321">
    <property type="entry name" value="Family A G protein-coupled receptor-like"/>
    <property type="match status" value="1"/>
</dbReference>
<dbReference type="PROSITE" id="PS00237">
    <property type="entry name" value="G_PROTEIN_RECEP_F1_1"/>
    <property type="match status" value="1"/>
</dbReference>
<dbReference type="PROSITE" id="PS50262">
    <property type="entry name" value="G_PROTEIN_RECEP_F1_2"/>
    <property type="match status" value="1"/>
</dbReference>